<keyword id="KW-0030">Aminoacyl-tRNA synthetase</keyword>
<keyword id="KW-0067">ATP-binding</keyword>
<keyword id="KW-0963">Cytoplasm</keyword>
<keyword id="KW-0436">Ligase</keyword>
<keyword id="KW-0547">Nucleotide-binding</keyword>
<keyword id="KW-0648">Protein biosynthesis</keyword>
<name>SYH_METM7</name>
<proteinExistence type="inferred from homology"/>
<evidence type="ECO:0000255" key="1">
    <source>
        <dbReference type="HAMAP-Rule" id="MF_00127"/>
    </source>
</evidence>
<feature type="chain" id="PRO_1000016392" description="Histidine--tRNA ligase">
    <location>
        <begin position="1"/>
        <end position="418"/>
    </location>
</feature>
<reference key="1">
    <citation type="submission" date="2007-06" db="EMBL/GenBank/DDBJ databases">
        <title>Complete sequence of Methanococcus maripaludis C7.</title>
        <authorList>
            <consortium name="US DOE Joint Genome Institute"/>
            <person name="Copeland A."/>
            <person name="Lucas S."/>
            <person name="Lapidus A."/>
            <person name="Barry K."/>
            <person name="Glavina del Rio T."/>
            <person name="Dalin E."/>
            <person name="Tice H."/>
            <person name="Pitluck S."/>
            <person name="Clum A."/>
            <person name="Schmutz J."/>
            <person name="Larimer F."/>
            <person name="Land M."/>
            <person name="Hauser L."/>
            <person name="Kyrpides N."/>
            <person name="Anderson I."/>
            <person name="Sieprawska-Lupa M."/>
            <person name="Whitman W.B."/>
            <person name="Richardson P."/>
        </authorList>
    </citation>
    <scope>NUCLEOTIDE SEQUENCE [LARGE SCALE GENOMIC DNA]</scope>
    <source>
        <strain>C7 / ATCC BAA-1331</strain>
    </source>
</reference>
<gene>
    <name evidence="1" type="primary">hisS</name>
    <name type="ordered locus">MmarC7_0862</name>
</gene>
<accession>A6VHK3</accession>
<protein>
    <recommendedName>
        <fullName evidence="1">Histidine--tRNA ligase</fullName>
        <ecNumber evidence="1">6.1.1.21</ecNumber>
    </recommendedName>
    <alternativeName>
        <fullName evidence="1">Histidyl-tRNA synthetase</fullName>
        <shortName evidence="1">HisRS</shortName>
    </alternativeName>
</protein>
<comment type="catalytic activity">
    <reaction evidence="1">
        <text>tRNA(His) + L-histidine + ATP = L-histidyl-tRNA(His) + AMP + diphosphate + H(+)</text>
        <dbReference type="Rhea" id="RHEA:17313"/>
        <dbReference type="Rhea" id="RHEA-COMP:9665"/>
        <dbReference type="Rhea" id="RHEA-COMP:9689"/>
        <dbReference type="ChEBI" id="CHEBI:15378"/>
        <dbReference type="ChEBI" id="CHEBI:30616"/>
        <dbReference type="ChEBI" id="CHEBI:33019"/>
        <dbReference type="ChEBI" id="CHEBI:57595"/>
        <dbReference type="ChEBI" id="CHEBI:78442"/>
        <dbReference type="ChEBI" id="CHEBI:78527"/>
        <dbReference type="ChEBI" id="CHEBI:456215"/>
        <dbReference type="EC" id="6.1.1.21"/>
    </reaction>
</comment>
<comment type="subcellular location">
    <subcellularLocation>
        <location evidence="1">Cytoplasm</location>
    </subcellularLocation>
</comment>
<comment type="similarity">
    <text evidence="1">Belongs to the class-II aminoacyl-tRNA synthetase family.</text>
</comment>
<organism>
    <name type="scientific">Methanococcus maripaludis (strain C7 / ATCC BAA-1331)</name>
    <dbReference type="NCBI Taxonomy" id="426368"/>
    <lineage>
        <taxon>Archaea</taxon>
        <taxon>Methanobacteriati</taxon>
        <taxon>Methanobacteriota</taxon>
        <taxon>Methanomada group</taxon>
        <taxon>Methanococci</taxon>
        <taxon>Methanococcales</taxon>
        <taxon>Methanococcaceae</taxon>
        <taxon>Methanococcus</taxon>
    </lineage>
</organism>
<sequence>MIMFQKPKGTRDFLPEEMKKRKVIEKKLRKVFDSYNFSEINTPTFESFELLSKKTGDEIRTQLFVFKDHGDREMGLRPELTSSVARFYINEFKNTPKPVKLYYFTNCFRYENPQAGRYREFWQMGSELIGSNKPIADAEVINMAIEGLKEINMDFEINIGHLGVLKGVFEKYDLSDDEGNEIRRLIDKEDMDGLKSALNRIESEKNIEISEKVFEVLDLKGGREVISKLKEKLAEFESSIAALENLDSILEFVPHEYIINFGIARGLDYYTGMVFEIYGKREGARQVCGGGRYDNLIELFEGEPSPAVGFAYGFDRIMLNIDDFEVEEESIFVVPVKSSDMLLNECLKIAKTLREAGKAVELDLMGRKLNKALNYANTKGIKKVIIVGENDILEGKVALKNMETGEQSLIELKDILTI</sequence>
<dbReference type="EC" id="6.1.1.21" evidence="1"/>
<dbReference type="EMBL" id="CP000745">
    <property type="protein sequence ID" value="ABR65929.1"/>
    <property type="molecule type" value="Genomic_DNA"/>
</dbReference>
<dbReference type="SMR" id="A6VHK3"/>
<dbReference type="STRING" id="426368.MmarC7_0862"/>
<dbReference type="KEGG" id="mmz:MmarC7_0862"/>
<dbReference type="eggNOG" id="arCOG00404">
    <property type="taxonomic scope" value="Archaea"/>
</dbReference>
<dbReference type="HOGENOM" id="CLU_025113_3_1_2"/>
<dbReference type="OrthoDB" id="8659at2157"/>
<dbReference type="GO" id="GO:0005737">
    <property type="term" value="C:cytoplasm"/>
    <property type="evidence" value="ECO:0007669"/>
    <property type="project" value="UniProtKB-SubCell"/>
</dbReference>
<dbReference type="GO" id="GO:0005524">
    <property type="term" value="F:ATP binding"/>
    <property type="evidence" value="ECO:0007669"/>
    <property type="project" value="UniProtKB-UniRule"/>
</dbReference>
<dbReference type="GO" id="GO:0004821">
    <property type="term" value="F:histidine-tRNA ligase activity"/>
    <property type="evidence" value="ECO:0007669"/>
    <property type="project" value="UniProtKB-UniRule"/>
</dbReference>
<dbReference type="GO" id="GO:0006427">
    <property type="term" value="P:histidyl-tRNA aminoacylation"/>
    <property type="evidence" value="ECO:0007669"/>
    <property type="project" value="UniProtKB-UniRule"/>
</dbReference>
<dbReference type="GO" id="GO:0000105">
    <property type="term" value="P:L-histidine biosynthetic process"/>
    <property type="evidence" value="ECO:0007669"/>
    <property type="project" value="InterPro"/>
</dbReference>
<dbReference type="CDD" id="cd00773">
    <property type="entry name" value="HisRS-like_core"/>
    <property type="match status" value="1"/>
</dbReference>
<dbReference type="Gene3D" id="3.40.50.800">
    <property type="entry name" value="Anticodon-binding domain"/>
    <property type="match status" value="1"/>
</dbReference>
<dbReference type="Gene3D" id="3.30.930.10">
    <property type="entry name" value="Bira Bifunctional Protein, Domain 2"/>
    <property type="match status" value="1"/>
</dbReference>
<dbReference type="HAMAP" id="MF_00127">
    <property type="entry name" value="His_tRNA_synth"/>
    <property type="match status" value="1"/>
</dbReference>
<dbReference type="HAMAP" id="MF_00125">
    <property type="entry name" value="HisZ"/>
    <property type="match status" value="1"/>
</dbReference>
<dbReference type="InterPro" id="IPR006195">
    <property type="entry name" value="aa-tRNA-synth_II"/>
</dbReference>
<dbReference type="InterPro" id="IPR045864">
    <property type="entry name" value="aa-tRNA-synth_II/BPL/LPL"/>
</dbReference>
<dbReference type="InterPro" id="IPR004154">
    <property type="entry name" value="Anticodon-bd"/>
</dbReference>
<dbReference type="InterPro" id="IPR036621">
    <property type="entry name" value="Anticodon-bd_dom_sf"/>
</dbReference>
<dbReference type="InterPro" id="IPR015807">
    <property type="entry name" value="His-tRNA-ligase"/>
</dbReference>
<dbReference type="InterPro" id="IPR041715">
    <property type="entry name" value="HisRS-like_core"/>
</dbReference>
<dbReference type="InterPro" id="IPR004516">
    <property type="entry name" value="HisRS/HisZ"/>
</dbReference>
<dbReference type="InterPro" id="IPR004517">
    <property type="entry name" value="HisZ"/>
</dbReference>
<dbReference type="NCBIfam" id="TIGR00442">
    <property type="entry name" value="hisS"/>
    <property type="match status" value="1"/>
</dbReference>
<dbReference type="NCBIfam" id="TIGR00443">
    <property type="entry name" value="hisZ_biosyn_reg"/>
    <property type="match status" value="1"/>
</dbReference>
<dbReference type="PANTHER" id="PTHR43707:SF1">
    <property type="entry name" value="HISTIDINE--TRNA LIGASE, MITOCHONDRIAL-RELATED"/>
    <property type="match status" value="1"/>
</dbReference>
<dbReference type="PANTHER" id="PTHR43707">
    <property type="entry name" value="HISTIDYL-TRNA SYNTHETASE"/>
    <property type="match status" value="1"/>
</dbReference>
<dbReference type="Pfam" id="PF03129">
    <property type="entry name" value="HGTP_anticodon"/>
    <property type="match status" value="1"/>
</dbReference>
<dbReference type="Pfam" id="PF13393">
    <property type="entry name" value="tRNA-synt_His"/>
    <property type="match status" value="1"/>
</dbReference>
<dbReference type="PIRSF" id="PIRSF001549">
    <property type="entry name" value="His-tRNA_synth"/>
    <property type="match status" value="1"/>
</dbReference>
<dbReference type="SUPFAM" id="SSF52954">
    <property type="entry name" value="Class II aaRS ABD-related"/>
    <property type="match status" value="1"/>
</dbReference>
<dbReference type="SUPFAM" id="SSF55681">
    <property type="entry name" value="Class II aaRS and biotin synthetases"/>
    <property type="match status" value="1"/>
</dbReference>
<dbReference type="PROSITE" id="PS50862">
    <property type="entry name" value="AA_TRNA_LIGASE_II"/>
    <property type="match status" value="1"/>
</dbReference>